<proteinExistence type="inferred from homology"/>
<reference key="1">
    <citation type="journal article" date="2005" name="Proc. Natl. Acad. Sci. U.S.A.">
        <title>Whole genome sequence of Staphylococcus saprophyticus reveals the pathogenesis of uncomplicated urinary tract infection.</title>
        <authorList>
            <person name="Kuroda M."/>
            <person name="Yamashita A."/>
            <person name="Hirakawa H."/>
            <person name="Kumano M."/>
            <person name="Morikawa K."/>
            <person name="Higashide M."/>
            <person name="Maruyama A."/>
            <person name="Inose Y."/>
            <person name="Matoba K."/>
            <person name="Toh H."/>
            <person name="Kuhara S."/>
            <person name="Hattori M."/>
            <person name="Ohta T."/>
        </authorList>
    </citation>
    <scope>NUCLEOTIDE SEQUENCE [LARGE SCALE GENOMIC DNA]</scope>
    <source>
        <strain>ATCC 15305 / DSM 20229 / NCIMB 8711 / NCTC 7292 / S-41</strain>
    </source>
</reference>
<name>BRNQL_STAS1</name>
<comment type="function">
    <text evidence="2">Component of the transport system for branched-chain amino acids (leucine, isoleucine and valine), which is coupled to a proton motive force.</text>
</comment>
<comment type="subcellular location">
    <subcellularLocation>
        <location evidence="2">Cell membrane</location>
        <topology evidence="2">Multi-pass membrane protein</topology>
    </subcellularLocation>
</comment>
<comment type="similarity">
    <text evidence="2">Belongs to the branched chain amino acid transporter family.</text>
</comment>
<protein>
    <recommendedName>
        <fullName>Putative branched-chain amino acid carrier protein SSP1343</fullName>
    </recommendedName>
</protein>
<evidence type="ECO:0000255" key="1"/>
<evidence type="ECO:0000305" key="2"/>
<gene>
    <name type="ordered locus">SSP1343</name>
</gene>
<feature type="chain" id="PRO_0000294023" description="Putative branched-chain amino acid carrier protein SSP1343">
    <location>
        <begin position="1"/>
        <end position="447"/>
    </location>
</feature>
<feature type="transmembrane region" description="Helical" evidence="1">
    <location>
        <begin position="6"/>
        <end position="26"/>
    </location>
</feature>
<feature type="transmembrane region" description="Helical" evidence="1">
    <location>
        <begin position="40"/>
        <end position="60"/>
    </location>
</feature>
<feature type="transmembrane region" description="Helical" evidence="1">
    <location>
        <begin position="74"/>
        <end position="94"/>
    </location>
</feature>
<feature type="transmembrane region" description="Helical" evidence="1">
    <location>
        <begin position="116"/>
        <end position="136"/>
    </location>
</feature>
<feature type="transmembrane region" description="Helical" evidence="1">
    <location>
        <begin position="143"/>
        <end position="163"/>
    </location>
</feature>
<feature type="transmembrane region" description="Helical" evidence="1">
    <location>
        <begin position="192"/>
        <end position="212"/>
    </location>
</feature>
<feature type="transmembrane region" description="Helical" evidence="1">
    <location>
        <begin position="228"/>
        <end position="248"/>
    </location>
</feature>
<feature type="transmembrane region" description="Helical" evidence="1">
    <location>
        <begin position="289"/>
        <end position="309"/>
    </location>
</feature>
<feature type="transmembrane region" description="Helical" evidence="1">
    <location>
        <begin position="324"/>
        <end position="344"/>
    </location>
</feature>
<feature type="transmembrane region" description="Helical" evidence="1">
    <location>
        <begin position="349"/>
        <end position="369"/>
    </location>
</feature>
<feature type="transmembrane region" description="Helical" evidence="1">
    <location>
        <begin position="381"/>
        <end position="401"/>
    </location>
</feature>
<feature type="transmembrane region" description="Helical" evidence="1">
    <location>
        <begin position="416"/>
        <end position="436"/>
    </location>
</feature>
<keyword id="KW-0029">Amino-acid transport</keyword>
<keyword id="KW-1003">Cell membrane</keyword>
<keyword id="KW-0472">Membrane</keyword>
<keyword id="KW-1185">Reference proteome</keyword>
<keyword id="KW-0812">Transmembrane</keyword>
<keyword id="KW-1133">Transmembrane helix</keyword>
<keyword id="KW-0813">Transport</keyword>
<dbReference type="EMBL" id="AP008934">
    <property type="protein sequence ID" value="BAE18488.1"/>
    <property type="molecule type" value="Genomic_DNA"/>
</dbReference>
<dbReference type="GeneID" id="3616681"/>
<dbReference type="KEGG" id="ssp:SSP1343"/>
<dbReference type="PATRIC" id="fig|342451.11.peg.1347"/>
<dbReference type="eggNOG" id="COG1114">
    <property type="taxonomic scope" value="Bacteria"/>
</dbReference>
<dbReference type="HOGENOM" id="CLU_036807_0_1_9"/>
<dbReference type="OrthoDB" id="9783920at2"/>
<dbReference type="Proteomes" id="UP000006371">
    <property type="component" value="Chromosome"/>
</dbReference>
<dbReference type="GO" id="GO:0005886">
    <property type="term" value="C:plasma membrane"/>
    <property type="evidence" value="ECO:0007669"/>
    <property type="project" value="UniProtKB-SubCell"/>
</dbReference>
<dbReference type="GO" id="GO:0015188">
    <property type="term" value="F:L-isoleucine transmembrane transporter activity"/>
    <property type="evidence" value="ECO:0007669"/>
    <property type="project" value="TreeGrafter"/>
</dbReference>
<dbReference type="GO" id="GO:0015190">
    <property type="term" value="F:L-leucine transmembrane transporter activity"/>
    <property type="evidence" value="ECO:0007669"/>
    <property type="project" value="TreeGrafter"/>
</dbReference>
<dbReference type="GO" id="GO:0005304">
    <property type="term" value="F:L-valine transmembrane transporter activity"/>
    <property type="evidence" value="ECO:0007669"/>
    <property type="project" value="TreeGrafter"/>
</dbReference>
<dbReference type="GO" id="GO:0015818">
    <property type="term" value="P:isoleucine transport"/>
    <property type="evidence" value="ECO:0007669"/>
    <property type="project" value="TreeGrafter"/>
</dbReference>
<dbReference type="GO" id="GO:0015820">
    <property type="term" value="P:L-leucine transport"/>
    <property type="evidence" value="ECO:0007669"/>
    <property type="project" value="TreeGrafter"/>
</dbReference>
<dbReference type="Gene3D" id="1.20.1740.10">
    <property type="entry name" value="Amino acid/polyamine transporter I"/>
    <property type="match status" value="1"/>
</dbReference>
<dbReference type="InterPro" id="IPR004685">
    <property type="entry name" value="Brnchd-chn_aa_trnsp_Livcs"/>
</dbReference>
<dbReference type="NCBIfam" id="TIGR00796">
    <property type="entry name" value="livcs"/>
    <property type="match status" value="1"/>
</dbReference>
<dbReference type="PANTHER" id="PTHR30588:SF7">
    <property type="entry name" value="BRANCHED-CHAIN AMINO ACID CARRIER PROTEIN SAOUHSC_01411-RELATED"/>
    <property type="match status" value="1"/>
</dbReference>
<dbReference type="PANTHER" id="PTHR30588">
    <property type="entry name" value="BRANCHED-CHAIN AMINO ACID TRANSPORT SYSTEM 2 CARRIER PROTEIN"/>
    <property type="match status" value="1"/>
</dbReference>
<dbReference type="Pfam" id="PF05525">
    <property type="entry name" value="Branch_AA_trans"/>
    <property type="match status" value="1"/>
</dbReference>
<sequence>MNKNTWIIGFTLFAMFFGAGNLIFPPNLGLESGQYFWPSILAFALTGIGLPLLGVIVGALDKQGYIGSLNKISPKFSIIFLIIIYLTIGPLFAIPRTASTSFEMTVTPIANTNSNLALFIFTVIYFLIVLYLCINPSRMVDRIGSLLTPLLLITILAMIVKGFVDYGSNSHSQATDAFTSNFSGFSQGFTNGYLTMDAIAAIAFSMIVVNAVKATGVTHANKIFKQTLMAGIIAAVALMFIYISLGYIGNHMAVSQEKIASLTANDQNIGTYLLTTMASVGFGTFGKYLLGIIVALACLTTACGLVVAVSEYFHRIFPRISYKIYVIIFTLISFILANQGLNSVITMSVPVLSIVYPIAITSVLLILLARFVPTKPIAQQIPVAIVSIVSILSMIHTQGWIKLSFIDSLPLKSYSLEWFPIAIVTTIIGYIVAAMVKKQKPIVYEKE</sequence>
<organism>
    <name type="scientific">Staphylococcus saprophyticus subsp. saprophyticus (strain ATCC 15305 / DSM 20229 / NCIMB 8711 / NCTC 7292 / S-41)</name>
    <dbReference type="NCBI Taxonomy" id="342451"/>
    <lineage>
        <taxon>Bacteria</taxon>
        <taxon>Bacillati</taxon>
        <taxon>Bacillota</taxon>
        <taxon>Bacilli</taxon>
        <taxon>Bacillales</taxon>
        <taxon>Staphylococcaceae</taxon>
        <taxon>Staphylococcus</taxon>
    </lineage>
</organism>
<accession>Q49XK9</accession>